<gene>
    <name evidence="1" type="primary">argB</name>
    <name type="ordered locus">Ppro_3174</name>
</gene>
<feature type="chain" id="PRO_1000010522" description="Acetylglutamate kinase">
    <location>
        <begin position="1"/>
        <end position="292"/>
    </location>
</feature>
<feature type="binding site" evidence="1">
    <location>
        <begin position="64"/>
        <end position="65"/>
    </location>
    <ligand>
        <name>substrate</name>
    </ligand>
</feature>
<feature type="binding site" evidence="1">
    <location>
        <position position="86"/>
    </location>
    <ligand>
        <name>substrate</name>
    </ligand>
</feature>
<feature type="binding site" evidence="1">
    <location>
        <position position="190"/>
    </location>
    <ligand>
        <name>substrate</name>
    </ligand>
</feature>
<feature type="site" description="Transition state stabilizer" evidence="1">
    <location>
        <position position="29"/>
    </location>
</feature>
<feature type="site" description="Transition state stabilizer" evidence="1">
    <location>
        <position position="250"/>
    </location>
</feature>
<protein>
    <recommendedName>
        <fullName evidence="1">Acetylglutamate kinase</fullName>
        <ecNumber evidence="1">2.7.2.8</ecNumber>
    </recommendedName>
    <alternativeName>
        <fullName evidence="1">N-acetyl-L-glutamate 5-phosphotransferase</fullName>
    </alternativeName>
    <alternativeName>
        <fullName evidence="1">NAG kinase</fullName>
        <shortName evidence="1">NAGK</shortName>
    </alternativeName>
</protein>
<accession>A1ATU7</accession>
<keyword id="KW-0028">Amino-acid biosynthesis</keyword>
<keyword id="KW-0055">Arginine biosynthesis</keyword>
<keyword id="KW-0067">ATP-binding</keyword>
<keyword id="KW-0963">Cytoplasm</keyword>
<keyword id="KW-0418">Kinase</keyword>
<keyword id="KW-0547">Nucleotide-binding</keyword>
<keyword id="KW-1185">Reference proteome</keyword>
<keyword id="KW-0808">Transferase</keyword>
<sequence>MEKLIEKANNLMEALPYIRRFAGKTFVIKYGGHAMSDEKLKESFALDVIMLRSLGINAVIVHGGGPQINQTLKRYGIVSQFVKGMRVTDSETMAVVEMVLVGQVNKEVVGYLNQHGGRAVGLSGKDGTLLLSKKLLQDVVGDDGTTEQVDMGYVGDVVKVNTDLLKALENGNYLPVIAPVGVGPQGESYNINADLVAGRVAAALNAEKLILLTDIEGVKDKAGQLLSSIAVADMHRLIREEAITGGMIPKVVCCADALEEGVKKAHIIDGRVEHAVLLEIFTDVGIGTEIQK</sequence>
<dbReference type="EC" id="2.7.2.8" evidence="1"/>
<dbReference type="EMBL" id="CP000482">
    <property type="protein sequence ID" value="ABL00768.1"/>
    <property type="molecule type" value="Genomic_DNA"/>
</dbReference>
<dbReference type="RefSeq" id="WP_011736999.1">
    <property type="nucleotide sequence ID" value="NC_008609.1"/>
</dbReference>
<dbReference type="SMR" id="A1ATU7"/>
<dbReference type="STRING" id="338966.Ppro_3174"/>
<dbReference type="KEGG" id="ppd:Ppro_3174"/>
<dbReference type="eggNOG" id="COG0548">
    <property type="taxonomic scope" value="Bacteria"/>
</dbReference>
<dbReference type="HOGENOM" id="CLU_053680_0_0_7"/>
<dbReference type="OrthoDB" id="9803155at2"/>
<dbReference type="UniPathway" id="UPA00068">
    <property type="reaction ID" value="UER00107"/>
</dbReference>
<dbReference type="Proteomes" id="UP000006732">
    <property type="component" value="Chromosome"/>
</dbReference>
<dbReference type="GO" id="GO:0005737">
    <property type="term" value="C:cytoplasm"/>
    <property type="evidence" value="ECO:0007669"/>
    <property type="project" value="UniProtKB-SubCell"/>
</dbReference>
<dbReference type="GO" id="GO:0003991">
    <property type="term" value="F:acetylglutamate kinase activity"/>
    <property type="evidence" value="ECO:0007669"/>
    <property type="project" value="UniProtKB-UniRule"/>
</dbReference>
<dbReference type="GO" id="GO:0005524">
    <property type="term" value="F:ATP binding"/>
    <property type="evidence" value="ECO:0007669"/>
    <property type="project" value="UniProtKB-UniRule"/>
</dbReference>
<dbReference type="GO" id="GO:0042450">
    <property type="term" value="P:arginine biosynthetic process via ornithine"/>
    <property type="evidence" value="ECO:0007669"/>
    <property type="project" value="UniProtKB-UniRule"/>
</dbReference>
<dbReference type="GO" id="GO:0006526">
    <property type="term" value="P:L-arginine biosynthetic process"/>
    <property type="evidence" value="ECO:0007669"/>
    <property type="project" value="UniProtKB-UniPathway"/>
</dbReference>
<dbReference type="CDD" id="cd04250">
    <property type="entry name" value="AAK_NAGK-C"/>
    <property type="match status" value="1"/>
</dbReference>
<dbReference type="FunFam" id="3.40.1160.10:FF:000004">
    <property type="entry name" value="Acetylglutamate kinase"/>
    <property type="match status" value="1"/>
</dbReference>
<dbReference type="Gene3D" id="3.40.1160.10">
    <property type="entry name" value="Acetylglutamate kinase-like"/>
    <property type="match status" value="1"/>
</dbReference>
<dbReference type="HAMAP" id="MF_00082">
    <property type="entry name" value="ArgB"/>
    <property type="match status" value="1"/>
</dbReference>
<dbReference type="InterPro" id="IPR036393">
    <property type="entry name" value="AceGlu_kinase-like_sf"/>
</dbReference>
<dbReference type="InterPro" id="IPR004662">
    <property type="entry name" value="AcgluKinase_fam"/>
</dbReference>
<dbReference type="InterPro" id="IPR037528">
    <property type="entry name" value="ArgB"/>
</dbReference>
<dbReference type="InterPro" id="IPR001048">
    <property type="entry name" value="Asp/Glu/Uridylate_kinase"/>
</dbReference>
<dbReference type="InterPro" id="IPR001057">
    <property type="entry name" value="Glu/AcGlu_kinase"/>
</dbReference>
<dbReference type="InterPro" id="IPR041727">
    <property type="entry name" value="NAGK-C"/>
</dbReference>
<dbReference type="NCBIfam" id="TIGR00761">
    <property type="entry name" value="argB"/>
    <property type="match status" value="1"/>
</dbReference>
<dbReference type="PANTHER" id="PTHR23342">
    <property type="entry name" value="N-ACETYLGLUTAMATE SYNTHASE"/>
    <property type="match status" value="1"/>
</dbReference>
<dbReference type="PANTHER" id="PTHR23342:SF0">
    <property type="entry name" value="N-ACETYLGLUTAMATE SYNTHASE, MITOCHONDRIAL"/>
    <property type="match status" value="1"/>
</dbReference>
<dbReference type="Pfam" id="PF00696">
    <property type="entry name" value="AA_kinase"/>
    <property type="match status" value="1"/>
</dbReference>
<dbReference type="PIRSF" id="PIRSF000728">
    <property type="entry name" value="NAGK"/>
    <property type="match status" value="1"/>
</dbReference>
<dbReference type="PRINTS" id="PR00474">
    <property type="entry name" value="GLU5KINASE"/>
</dbReference>
<dbReference type="SUPFAM" id="SSF53633">
    <property type="entry name" value="Carbamate kinase-like"/>
    <property type="match status" value="1"/>
</dbReference>
<evidence type="ECO:0000255" key="1">
    <source>
        <dbReference type="HAMAP-Rule" id="MF_00082"/>
    </source>
</evidence>
<name>ARGB_PELPD</name>
<comment type="function">
    <text evidence="1">Catalyzes the ATP-dependent phosphorylation of N-acetyl-L-glutamate.</text>
</comment>
<comment type="catalytic activity">
    <reaction evidence="1">
        <text>N-acetyl-L-glutamate + ATP = N-acetyl-L-glutamyl 5-phosphate + ADP</text>
        <dbReference type="Rhea" id="RHEA:14629"/>
        <dbReference type="ChEBI" id="CHEBI:30616"/>
        <dbReference type="ChEBI" id="CHEBI:44337"/>
        <dbReference type="ChEBI" id="CHEBI:57936"/>
        <dbReference type="ChEBI" id="CHEBI:456216"/>
        <dbReference type="EC" id="2.7.2.8"/>
    </reaction>
</comment>
<comment type="pathway">
    <text evidence="1">Amino-acid biosynthesis; L-arginine biosynthesis; N(2)-acetyl-L-ornithine from L-glutamate: step 2/4.</text>
</comment>
<comment type="subcellular location">
    <subcellularLocation>
        <location evidence="1">Cytoplasm</location>
    </subcellularLocation>
</comment>
<comment type="similarity">
    <text evidence="1">Belongs to the acetylglutamate kinase family. ArgB subfamily.</text>
</comment>
<organism>
    <name type="scientific">Pelobacter propionicus (strain DSM 2379 / NBRC 103807 / OttBd1)</name>
    <dbReference type="NCBI Taxonomy" id="338966"/>
    <lineage>
        <taxon>Bacteria</taxon>
        <taxon>Pseudomonadati</taxon>
        <taxon>Thermodesulfobacteriota</taxon>
        <taxon>Desulfuromonadia</taxon>
        <taxon>Desulfuromonadales</taxon>
        <taxon>Desulfuromonadaceae</taxon>
        <taxon>Pelobacter</taxon>
    </lineage>
</organism>
<reference key="1">
    <citation type="submission" date="2006-10" db="EMBL/GenBank/DDBJ databases">
        <title>Complete sequence of chromosome of Pelobacter propionicus DSM 2379.</title>
        <authorList>
            <consortium name="US DOE Joint Genome Institute"/>
            <person name="Copeland A."/>
            <person name="Lucas S."/>
            <person name="Lapidus A."/>
            <person name="Barry K."/>
            <person name="Detter J.C."/>
            <person name="Glavina del Rio T."/>
            <person name="Hammon N."/>
            <person name="Israni S."/>
            <person name="Dalin E."/>
            <person name="Tice H."/>
            <person name="Pitluck S."/>
            <person name="Saunders E."/>
            <person name="Brettin T."/>
            <person name="Bruce D."/>
            <person name="Han C."/>
            <person name="Tapia R."/>
            <person name="Schmutz J."/>
            <person name="Larimer F."/>
            <person name="Land M."/>
            <person name="Hauser L."/>
            <person name="Kyrpides N."/>
            <person name="Kim E."/>
            <person name="Lovley D."/>
            <person name="Richardson P."/>
        </authorList>
    </citation>
    <scope>NUCLEOTIDE SEQUENCE [LARGE SCALE GENOMIC DNA]</scope>
    <source>
        <strain>DSM 2379 / NBRC 103807 / OttBd1</strain>
    </source>
</reference>
<proteinExistence type="inferred from homology"/>